<sequence length="100" mass="10165">MCSGPKQGLTLPASVDLEKETVITGRVVDGDGQAVGGAFVRLLDSSDEFTAEVVASATGDFRFFAAPGSWTLRALSAAGNGDAVVQPSGAGIHEVDVKIT</sequence>
<dbReference type="EMBL" id="AL123456">
    <property type="protein sequence ID" value="CCP43562.1"/>
    <property type="molecule type" value="Genomic_DNA"/>
</dbReference>
<dbReference type="PIR" id="F70809">
    <property type="entry name" value="F70809"/>
</dbReference>
<dbReference type="RefSeq" id="NP_215329.1">
    <property type="nucleotide sequence ID" value="NC_000962.3"/>
</dbReference>
<dbReference type="RefSeq" id="WP_003404278.1">
    <property type="nucleotide sequence ID" value="NZ_NVQJ01000118.1"/>
</dbReference>
<dbReference type="RefSeq" id="YP_177930.1">
    <property type="nucleotide sequence ID" value="NC_000962.3"/>
</dbReference>
<dbReference type="SMR" id="P0CG95"/>
<dbReference type="GeneID" id="885435"/>
<dbReference type="KEGG" id="mtu:Rv0814c"/>
<dbReference type="KEGG" id="mtu:Rv3118"/>
<dbReference type="KEGG" id="mtv:RVBD_0814c"/>
<dbReference type="KEGG" id="mtv:RVBD_3118"/>
<dbReference type="TubercuList" id="Rv0814c"/>
<dbReference type="InParanoid" id="P0CG95"/>
<dbReference type="OrthoDB" id="3729294at2"/>
<dbReference type="PhylomeDB" id="P0CG95"/>
<dbReference type="Proteomes" id="UP000001584">
    <property type="component" value="Chromosome"/>
</dbReference>
<dbReference type="GO" id="GO:0009274">
    <property type="term" value="C:peptidoglycan-based cell wall"/>
    <property type="evidence" value="ECO:0007005"/>
    <property type="project" value="MTBBASE"/>
</dbReference>
<dbReference type="GO" id="GO:0005886">
    <property type="term" value="C:plasma membrane"/>
    <property type="evidence" value="ECO:0007005"/>
    <property type="project" value="MTBBASE"/>
</dbReference>
<dbReference type="FunFam" id="2.60.40.1120:FF:000013">
    <property type="entry name" value="DUF1416 domain-containing protein"/>
    <property type="match status" value="1"/>
</dbReference>
<dbReference type="Gene3D" id="2.60.40.1120">
    <property type="entry name" value="Carboxypeptidase-like, regulatory domain"/>
    <property type="match status" value="1"/>
</dbReference>
<dbReference type="InterPro" id="IPR008969">
    <property type="entry name" value="CarboxyPept-like_regulatory"/>
</dbReference>
<dbReference type="InterPro" id="IPR010814">
    <property type="entry name" value="DUF1416"/>
</dbReference>
<dbReference type="Pfam" id="PF07210">
    <property type="entry name" value="DUF1416"/>
    <property type="match status" value="1"/>
</dbReference>
<dbReference type="SUPFAM" id="SSF49464">
    <property type="entry name" value="Carboxypeptidase regulatory domain-like"/>
    <property type="match status" value="1"/>
</dbReference>
<evidence type="ECO:0000269" key="1">
    <source>
    </source>
</evidence>
<organism>
    <name type="scientific">Mycobacterium tuberculosis (strain ATCC 25618 / H37Rv)</name>
    <dbReference type="NCBI Taxonomy" id="83332"/>
    <lineage>
        <taxon>Bacteria</taxon>
        <taxon>Bacillati</taxon>
        <taxon>Actinomycetota</taxon>
        <taxon>Actinomycetes</taxon>
        <taxon>Mycobacteriales</taxon>
        <taxon>Mycobacteriaceae</taxon>
        <taxon>Mycobacterium</taxon>
        <taxon>Mycobacterium tuberculosis complex</taxon>
    </lineage>
</organism>
<accession>P0CG95</accession>
<accession>L0T7T3</accession>
<accession>Q6MX10</accession>
<accession>Q7ARR3</accession>
<accession>Q7D986</accession>
<feature type="chain" id="PRO_0000396092" description="Uncharacterized protein Rv0814c">
    <location>
        <begin position="1"/>
        <end position="100"/>
    </location>
</feature>
<feature type="cross-link" description="Isoglutamyl lysine isopeptide (Lys-Gln) (interchain with Q-Cter in protein Pup)" evidence="1">
    <location>
        <position position="98"/>
    </location>
</feature>
<reference key="1">
    <citation type="journal article" date="1998" name="Nature">
        <title>Deciphering the biology of Mycobacterium tuberculosis from the complete genome sequence.</title>
        <authorList>
            <person name="Cole S.T."/>
            <person name="Brosch R."/>
            <person name="Parkhill J."/>
            <person name="Garnier T."/>
            <person name="Churcher C.M."/>
            <person name="Harris D.E."/>
            <person name="Gordon S.V."/>
            <person name="Eiglmeier K."/>
            <person name="Gas S."/>
            <person name="Barry C.E. III"/>
            <person name="Tekaia F."/>
            <person name="Badcock K."/>
            <person name="Basham D."/>
            <person name="Brown D."/>
            <person name="Chillingworth T."/>
            <person name="Connor R."/>
            <person name="Davies R.M."/>
            <person name="Devlin K."/>
            <person name="Feltwell T."/>
            <person name="Gentles S."/>
            <person name="Hamlin N."/>
            <person name="Holroyd S."/>
            <person name="Hornsby T."/>
            <person name="Jagels K."/>
            <person name="Krogh A."/>
            <person name="McLean J."/>
            <person name="Moule S."/>
            <person name="Murphy L.D."/>
            <person name="Oliver S."/>
            <person name="Osborne J."/>
            <person name="Quail M.A."/>
            <person name="Rajandream M.A."/>
            <person name="Rogers J."/>
            <person name="Rutter S."/>
            <person name="Seeger K."/>
            <person name="Skelton S."/>
            <person name="Squares S."/>
            <person name="Squares R."/>
            <person name="Sulston J.E."/>
            <person name="Taylor K."/>
            <person name="Whitehead S."/>
            <person name="Barrell B.G."/>
        </authorList>
    </citation>
    <scope>NUCLEOTIDE SEQUENCE [LARGE SCALE GENOMIC DNA]</scope>
    <source>
        <strain>ATCC 25618 / H37Rv</strain>
    </source>
</reference>
<reference key="2">
    <citation type="journal article" date="2010" name="PLoS ONE">
        <title>Prokaryotic ubiquitin-like protein (Pup) proteome of Mycobacterium tuberculosis.</title>
        <authorList>
            <person name="Festa R.A."/>
            <person name="McAllister F."/>
            <person name="Pearce M.J."/>
            <person name="Mintseris J."/>
            <person name="Burns K.E."/>
            <person name="Gygi S.P."/>
            <person name="Darwin K.H."/>
        </authorList>
    </citation>
    <scope>PUPYLATION AT LYS-98</scope>
    <scope>IDENTIFICATION BY MASS SPECTROMETRY</scope>
    <source>
        <strain>ATCC 25618 / H37Rv</strain>
    </source>
</reference>
<reference key="3">
    <citation type="journal article" date="2011" name="Mol. Cell. Proteomics">
        <title>Proteogenomic analysis of Mycobacterium tuberculosis by high resolution mass spectrometry.</title>
        <authorList>
            <person name="Kelkar D.S."/>
            <person name="Kumar D."/>
            <person name="Kumar P."/>
            <person name="Balakrishnan L."/>
            <person name="Muthusamy B."/>
            <person name="Yadav A.K."/>
            <person name="Shrivastava P."/>
            <person name="Marimuthu A."/>
            <person name="Anand S."/>
            <person name="Sundaram H."/>
            <person name="Kingsbury R."/>
            <person name="Harsha H.C."/>
            <person name="Nair B."/>
            <person name="Prasad T.S."/>
            <person name="Chauhan D.S."/>
            <person name="Katoch K."/>
            <person name="Katoch V.M."/>
            <person name="Kumar P."/>
            <person name="Chaerkady R."/>
            <person name="Ramachandran S."/>
            <person name="Dash D."/>
            <person name="Pandey A."/>
        </authorList>
    </citation>
    <scope>IDENTIFICATION BY MASS SPECTROMETRY [LARGE SCALE ANALYSIS]</scope>
    <source>
        <strain>ATCC 25618 / H37Rv</strain>
    </source>
</reference>
<name>Y814_MYCTU</name>
<keyword id="KW-1017">Isopeptide bond</keyword>
<keyword id="KW-1185">Reference proteome</keyword>
<keyword id="KW-0832">Ubl conjugation</keyword>
<gene>
    <name type="primary">sseC2</name>
    <name type="ordered locus">Rv0814c</name>
</gene>
<protein>
    <recommendedName>
        <fullName>Uncharacterized protein Rv0814c</fullName>
    </recommendedName>
</protein>
<comment type="miscellaneous">
    <text>Pupylation of this protein has been demonstrated, however it is unknown if it is the product of this gene, of the identical gene Rv3118 (AC P0CG96), or of both of them.</text>
</comment>
<proteinExistence type="evidence at protein level"/>